<proteinExistence type="inferred from homology"/>
<evidence type="ECO:0000255" key="1">
    <source>
        <dbReference type="HAMAP-Rule" id="MF_01622"/>
    </source>
</evidence>
<protein>
    <recommendedName>
        <fullName evidence="1">tRNA 2-selenouridine synthase</fullName>
        <ecNumber evidence="1">2.9.1.3</ecNumber>
    </recommendedName>
</protein>
<keyword id="KW-0711">Selenium</keyword>
<keyword id="KW-0808">Transferase</keyword>
<sequence>MQERHTEQDYRALLIADTPIIDVRAPIEFEQGAMPAAINLPLMNNDERAAVGTCYKQQGSDAALALGHKLVAGEIRQQRMDAWRAACLQNPQGILCCARGGQRSHIVQSWLHAAGIDYPLVEGGYKALRQTAIQATIELAQKPIVLIGGCTGSGKTLLVQQQPNGVDLEGLARHRGSAFGRTLQPQLSQASFENLLAAEMLKTDARQNLRLWVLEDESRMIGSNHLPECLRERMTQAAIAVVEDPFEIRLERLNEEYFLRMHHDFTHAYGDEQGWQEYCEYLHHGLSAIKRRLGLQRYNELAARLDAALTTQLTTGSTDGHLAWLVPLLEEYYDPMYRYQLEKKAEKVVFRGEWAEVAEWVKAQ</sequence>
<gene>
    <name evidence="1" type="primary">selU</name>
    <name type="ordered locus">ECH74115_0604</name>
</gene>
<organism>
    <name type="scientific">Escherichia coli O157:H7 (strain EC4115 / EHEC)</name>
    <dbReference type="NCBI Taxonomy" id="444450"/>
    <lineage>
        <taxon>Bacteria</taxon>
        <taxon>Pseudomonadati</taxon>
        <taxon>Pseudomonadota</taxon>
        <taxon>Gammaproteobacteria</taxon>
        <taxon>Enterobacterales</taxon>
        <taxon>Enterobacteriaceae</taxon>
        <taxon>Escherichia</taxon>
    </lineage>
</organism>
<feature type="chain" id="PRO_1000186068" description="tRNA 2-selenouridine synthase">
    <location>
        <begin position="1"/>
        <end position="364"/>
    </location>
</feature>
<feature type="domain" description="Rhodanese" evidence="1">
    <location>
        <begin position="14"/>
        <end position="137"/>
    </location>
</feature>
<feature type="active site" description="S-selanylcysteine intermediate" evidence="1">
    <location>
        <position position="97"/>
    </location>
</feature>
<name>SELU_ECO5E</name>
<reference key="1">
    <citation type="journal article" date="2011" name="Proc. Natl. Acad. Sci. U.S.A.">
        <title>Genomic anatomy of Escherichia coli O157:H7 outbreaks.</title>
        <authorList>
            <person name="Eppinger M."/>
            <person name="Mammel M.K."/>
            <person name="Leclerc J.E."/>
            <person name="Ravel J."/>
            <person name="Cebula T.A."/>
        </authorList>
    </citation>
    <scope>NUCLEOTIDE SEQUENCE [LARGE SCALE GENOMIC DNA]</scope>
    <source>
        <strain>EC4115 / EHEC</strain>
    </source>
</reference>
<accession>B5YPM0</accession>
<comment type="function">
    <text evidence="1">Involved in the post-transcriptional modification of the uridine at the wobble position (U34) of tRNA(Lys), tRNA(Glu) and tRNA(Gln). Catalyzes the conversion of 2-thiouridine (S2U-RNA) to 2-selenouridine (Se2U-RNA). Acts in a two-step process involving geranylation of 2-thiouridine (S2U) to S-geranyl-2-thiouridine (geS2U) and subsequent selenation of the latter derivative to 2-selenouridine (Se2U) in the tRNA chain.</text>
</comment>
<comment type="catalytic activity">
    <reaction evidence="1">
        <text>5-methylaminomethyl-2-thiouridine(34) in tRNA + selenophosphate + (2E)-geranyl diphosphate + H2O + H(+) = 5-methylaminomethyl-2-selenouridine(34) in tRNA + (2E)-thiogeraniol + phosphate + diphosphate</text>
        <dbReference type="Rhea" id="RHEA:42716"/>
        <dbReference type="Rhea" id="RHEA-COMP:10195"/>
        <dbReference type="Rhea" id="RHEA-COMP:10196"/>
        <dbReference type="ChEBI" id="CHEBI:15377"/>
        <dbReference type="ChEBI" id="CHEBI:15378"/>
        <dbReference type="ChEBI" id="CHEBI:16144"/>
        <dbReference type="ChEBI" id="CHEBI:33019"/>
        <dbReference type="ChEBI" id="CHEBI:43474"/>
        <dbReference type="ChEBI" id="CHEBI:58057"/>
        <dbReference type="ChEBI" id="CHEBI:74455"/>
        <dbReference type="ChEBI" id="CHEBI:82743"/>
        <dbReference type="ChEBI" id="CHEBI:143703"/>
        <dbReference type="EC" id="2.9.1.3"/>
    </reaction>
    <physiologicalReaction direction="left-to-right" evidence="1">
        <dbReference type="Rhea" id="RHEA:42717"/>
    </physiologicalReaction>
</comment>
<comment type="catalytic activity">
    <reaction evidence="1">
        <text>5-methylaminomethyl-2-thiouridine(34) in tRNA + (2E)-geranyl diphosphate = 5-methylaminomethyl-S-(2E)-geranyl-thiouridine(34) in tRNA + diphosphate</text>
        <dbReference type="Rhea" id="RHEA:14085"/>
        <dbReference type="Rhea" id="RHEA-COMP:10195"/>
        <dbReference type="Rhea" id="RHEA-COMP:14654"/>
        <dbReference type="ChEBI" id="CHEBI:33019"/>
        <dbReference type="ChEBI" id="CHEBI:58057"/>
        <dbReference type="ChEBI" id="CHEBI:74455"/>
        <dbReference type="ChEBI" id="CHEBI:140632"/>
    </reaction>
    <physiologicalReaction direction="left-to-right" evidence="1">
        <dbReference type="Rhea" id="RHEA:14086"/>
    </physiologicalReaction>
</comment>
<comment type="catalytic activity">
    <reaction evidence="1">
        <text>5-methylaminomethyl-S-(2E)-geranyl-thiouridine(34) in tRNA + selenophosphate + H(+) = 5-methylaminomethyl-2-(Se-phospho)selenouridine(34) in tRNA + (2E)-thiogeraniol</text>
        <dbReference type="Rhea" id="RHEA:60172"/>
        <dbReference type="Rhea" id="RHEA-COMP:14654"/>
        <dbReference type="Rhea" id="RHEA-COMP:15523"/>
        <dbReference type="ChEBI" id="CHEBI:15378"/>
        <dbReference type="ChEBI" id="CHEBI:16144"/>
        <dbReference type="ChEBI" id="CHEBI:140632"/>
        <dbReference type="ChEBI" id="CHEBI:143702"/>
        <dbReference type="ChEBI" id="CHEBI:143703"/>
    </reaction>
    <physiologicalReaction direction="left-to-right" evidence="1">
        <dbReference type="Rhea" id="RHEA:60173"/>
    </physiologicalReaction>
</comment>
<comment type="catalytic activity">
    <reaction evidence="1">
        <text>5-methylaminomethyl-2-(Se-phospho)selenouridine(34) in tRNA + H2O = 5-methylaminomethyl-2-selenouridine(34) in tRNA + phosphate</text>
        <dbReference type="Rhea" id="RHEA:60176"/>
        <dbReference type="Rhea" id="RHEA-COMP:10196"/>
        <dbReference type="Rhea" id="RHEA-COMP:15523"/>
        <dbReference type="ChEBI" id="CHEBI:15377"/>
        <dbReference type="ChEBI" id="CHEBI:43474"/>
        <dbReference type="ChEBI" id="CHEBI:82743"/>
        <dbReference type="ChEBI" id="CHEBI:143702"/>
    </reaction>
    <physiologicalReaction direction="left-to-right" evidence="1">
        <dbReference type="Rhea" id="RHEA:60177"/>
    </physiologicalReaction>
</comment>
<comment type="subunit">
    <text evidence="1">Monomer.</text>
</comment>
<comment type="similarity">
    <text evidence="1">Belongs to the SelU family.</text>
</comment>
<dbReference type="EC" id="2.9.1.3" evidence="1"/>
<dbReference type="EMBL" id="CP001164">
    <property type="protein sequence ID" value="ACI39410.1"/>
    <property type="molecule type" value="Genomic_DNA"/>
</dbReference>
<dbReference type="SMR" id="B5YPM0"/>
<dbReference type="KEGG" id="ecf:ECH74115_0604"/>
<dbReference type="HOGENOM" id="CLU_043456_1_0_6"/>
<dbReference type="GO" id="GO:0016765">
    <property type="term" value="F:transferase activity, transferring alkyl or aryl (other than methyl) groups"/>
    <property type="evidence" value="ECO:0007669"/>
    <property type="project" value="UniProtKB-UniRule"/>
</dbReference>
<dbReference type="GO" id="GO:0043828">
    <property type="term" value="F:tRNA 2-selenouridine synthase activity"/>
    <property type="evidence" value="ECO:0007669"/>
    <property type="project" value="UniProtKB-EC"/>
</dbReference>
<dbReference type="GO" id="GO:0002098">
    <property type="term" value="P:tRNA wobble uridine modification"/>
    <property type="evidence" value="ECO:0007669"/>
    <property type="project" value="UniProtKB-UniRule"/>
</dbReference>
<dbReference type="CDD" id="cd01520">
    <property type="entry name" value="RHOD_YbbB"/>
    <property type="match status" value="1"/>
</dbReference>
<dbReference type="FunFam" id="3.40.250.10:FF:000009">
    <property type="entry name" value="tRNA 2-selenouridine/geranyl-2-thiouridine synthase"/>
    <property type="match status" value="1"/>
</dbReference>
<dbReference type="Gene3D" id="3.40.250.10">
    <property type="entry name" value="Rhodanese-like domain"/>
    <property type="match status" value="1"/>
</dbReference>
<dbReference type="HAMAP" id="MF_01622">
    <property type="entry name" value="tRNA_sel_U_synth"/>
    <property type="match status" value="1"/>
</dbReference>
<dbReference type="InterPro" id="IPR001763">
    <property type="entry name" value="Rhodanese-like_dom"/>
</dbReference>
<dbReference type="InterPro" id="IPR036873">
    <property type="entry name" value="Rhodanese-like_dom_sf"/>
</dbReference>
<dbReference type="InterPro" id="IPR017582">
    <property type="entry name" value="SelU"/>
</dbReference>
<dbReference type="NCBIfam" id="NF008749">
    <property type="entry name" value="PRK11784.1-1"/>
    <property type="match status" value="1"/>
</dbReference>
<dbReference type="NCBIfam" id="NF008751">
    <property type="entry name" value="PRK11784.1-3"/>
    <property type="match status" value="1"/>
</dbReference>
<dbReference type="NCBIfam" id="TIGR03167">
    <property type="entry name" value="tRNA_sel_U_synt"/>
    <property type="match status" value="1"/>
</dbReference>
<dbReference type="PANTHER" id="PTHR30401">
    <property type="entry name" value="TRNA 2-SELENOURIDINE SYNTHASE"/>
    <property type="match status" value="1"/>
</dbReference>
<dbReference type="PANTHER" id="PTHR30401:SF0">
    <property type="entry name" value="TRNA 2-SELENOURIDINE SYNTHASE"/>
    <property type="match status" value="1"/>
</dbReference>
<dbReference type="Pfam" id="PF00581">
    <property type="entry name" value="Rhodanese"/>
    <property type="match status" value="1"/>
</dbReference>
<dbReference type="SMART" id="SM00450">
    <property type="entry name" value="RHOD"/>
    <property type="match status" value="1"/>
</dbReference>
<dbReference type="SUPFAM" id="SSF52821">
    <property type="entry name" value="Rhodanese/Cell cycle control phosphatase"/>
    <property type="match status" value="1"/>
</dbReference>
<dbReference type="PROSITE" id="PS50206">
    <property type="entry name" value="RHODANESE_3"/>
    <property type="match status" value="1"/>
</dbReference>